<reference key="1">
    <citation type="journal article" date="1997" name="FEBS Lett.">
        <title>Characterization of a marsupial glutathione transferase, a class Alpha enzyme from Brown Antechinus (Antechinus stuartii).</title>
        <authorList>
            <person name="Bolton R.M."/>
            <person name="Curstedt L."/>
            <person name="Cederlund E."/>
            <person name="Hjelmqvist L."/>
            <person name="Mannervik B."/>
            <person name="Ahokas J.T."/>
            <person name="Joernvall H."/>
        </authorList>
    </citation>
    <scope>PROTEIN SEQUENCE</scope>
    <scope>ACETYLATION AT MET-1</scope>
</reference>
<protein>
    <recommendedName>
        <fullName>Glutathione S-transferase</fullName>
        <ecNumber evidence="2">2.5.1.18</ecNumber>
    </recommendedName>
    <alternativeName>
        <fullName>GST class-alpha</fullName>
    </alternativeName>
    <component>
        <recommendedName>
            <fullName>Glutathione S-transferase, N-terminally processed</fullName>
        </recommendedName>
    </component>
</protein>
<keyword id="KW-0007">Acetylation</keyword>
<keyword id="KW-0963">Cytoplasm</keyword>
<keyword id="KW-0903">Direct protein sequencing</keyword>
<keyword id="KW-0808">Transferase</keyword>
<accession>P80894</accession>
<evidence type="ECO:0000250" key="1"/>
<evidence type="ECO:0000250" key="2">
    <source>
        <dbReference type="UniProtKB" id="P08263"/>
    </source>
</evidence>
<evidence type="ECO:0000250" key="3">
    <source>
        <dbReference type="UniProtKB" id="P13745"/>
    </source>
</evidence>
<evidence type="ECO:0000250" key="4">
    <source>
        <dbReference type="UniProtKB" id="P30115"/>
    </source>
</evidence>
<evidence type="ECO:0000250" key="5">
    <source>
        <dbReference type="UniProtKB" id="P30711"/>
    </source>
</evidence>
<evidence type="ECO:0000269" key="6">
    <source>
    </source>
</evidence>
<evidence type="ECO:0000305" key="7"/>
<proteinExistence type="evidence at protein level"/>
<sequence>MAGEQNIKYFNIKGRMEAIRWLLAVAGVEFEEKFFETKEQLQKLKETVLLFQQVPMVEIDGMKLVQTRAILHYIAEKYNLLGKDMKEHAQIIMYSEGTMDLMELIMIYPFLKGEEKKQRLVEIANKAKGRYFPAFENVLKTHGQNFLVGNQLSMADVQLFEAILMVEEKVPDALSGFPLLQAFKTRISNIPTVKTFLAPGSKRKPVPDAKYVEDIIKIFYF</sequence>
<comment type="function">
    <text evidence="2">Glutathione S-transferase that catalyzes the nucleophilic attack of the sulfur atom of glutathione on the electrophilic groups of a wide range of exogenous and endogenous compounds. Involved in the formation of glutathione conjugates of both prostaglandin A2 (PGA2) and prostaglandin J2 (PGJ2). It also catalyzes the isomerization of D5-androstene-3,17-dione (AD) into D4-androstene-3,17-dione and may therefore play an important role in hormone biosynthesis. Through its glutathione-dependent peroxidase activity toward the fatty acid hydroperoxide (13S)-hydroperoxy-(9Z,11E)-octadecadienoate/13-HPODE it is also involved in the metabolism of oxidized linoleic acid.</text>
</comment>
<comment type="catalytic activity">
    <reaction evidence="2">
        <text>RX + glutathione = an S-substituted glutathione + a halide anion + H(+)</text>
        <dbReference type="Rhea" id="RHEA:16437"/>
        <dbReference type="ChEBI" id="CHEBI:15378"/>
        <dbReference type="ChEBI" id="CHEBI:16042"/>
        <dbReference type="ChEBI" id="CHEBI:17792"/>
        <dbReference type="ChEBI" id="CHEBI:57925"/>
        <dbReference type="ChEBI" id="CHEBI:90779"/>
        <dbReference type="EC" id="2.5.1.18"/>
    </reaction>
    <physiologicalReaction direction="left-to-right" evidence="2">
        <dbReference type="Rhea" id="RHEA:16438"/>
    </physiologicalReaction>
</comment>
<comment type="catalytic activity">
    <reaction evidence="2">
        <text>prostaglandin A2 + glutathione = prostaglandin A2-S-(R)-glutathione</text>
        <dbReference type="Rhea" id="RHEA:50796"/>
        <dbReference type="ChEBI" id="CHEBI:57925"/>
        <dbReference type="ChEBI" id="CHEBI:133370"/>
        <dbReference type="ChEBI" id="CHEBI:133768"/>
    </reaction>
    <physiologicalReaction direction="left-to-right" evidence="2">
        <dbReference type="Rhea" id="RHEA:50797"/>
    </physiologicalReaction>
</comment>
<comment type="catalytic activity">
    <reaction evidence="2">
        <text>prostaglandin J2 + glutathione = prostaglandin J2-S-(R)-glutathione</text>
        <dbReference type="Rhea" id="RHEA:50804"/>
        <dbReference type="ChEBI" id="CHEBI:57925"/>
        <dbReference type="ChEBI" id="CHEBI:133396"/>
        <dbReference type="ChEBI" id="CHEBI:133771"/>
    </reaction>
    <physiologicalReaction direction="left-to-right" evidence="2">
        <dbReference type="Rhea" id="RHEA:50805"/>
    </physiologicalReaction>
</comment>
<comment type="catalytic activity">
    <reaction evidence="2">
        <text>(13S)-hydroperoxy-(9Z,11E)-octadecadienoate + 2 glutathione = (13S)-hydroxy-(9Z,11E)-octadecadienoate + glutathione disulfide + H2O</text>
        <dbReference type="Rhea" id="RHEA:48888"/>
        <dbReference type="ChEBI" id="CHEBI:15377"/>
        <dbReference type="ChEBI" id="CHEBI:57466"/>
        <dbReference type="ChEBI" id="CHEBI:57925"/>
        <dbReference type="ChEBI" id="CHEBI:58297"/>
        <dbReference type="ChEBI" id="CHEBI:90850"/>
    </reaction>
    <physiologicalReaction direction="left-to-right" evidence="2">
        <dbReference type="Rhea" id="RHEA:48889"/>
    </physiologicalReaction>
</comment>
<comment type="catalytic activity">
    <reaction evidence="2">
        <text>androst-5-ene-3,17-dione = androst-4-ene-3,17-dione</text>
        <dbReference type="Rhea" id="RHEA:43936"/>
        <dbReference type="ChEBI" id="CHEBI:16422"/>
        <dbReference type="ChEBI" id="CHEBI:83865"/>
    </reaction>
    <physiologicalReaction direction="left-to-right" evidence="2">
        <dbReference type="Rhea" id="RHEA:43937"/>
    </physiologicalReaction>
</comment>
<comment type="subunit">
    <text evidence="2">Homodimer or heterodimer of GSTA1 and GSTA2.</text>
</comment>
<comment type="subcellular location">
    <subcellularLocation>
        <location evidence="1">Cytoplasm</location>
    </subcellularLocation>
</comment>
<comment type="similarity">
    <text evidence="7">Belongs to the GST superfamily. Alpha family.</text>
</comment>
<feature type="chain" id="PRO_0000185803" description="Glutathione S-transferase">
    <location>
        <begin position="1"/>
        <end position="221"/>
    </location>
</feature>
<feature type="initiator methionine" description="Removed; alternate" evidence="4">
    <location>
        <position position="1"/>
    </location>
</feature>
<feature type="chain" id="PRO_0000421784" description="Glutathione S-transferase, N-terminally processed">
    <location>
        <begin position="2"/>
        <end position="221"/>
    </location>
</feature>
<feature type="domain" description="GST N-terminal">
    <location>
        <begin position="3"/>
        <end position="82"/>
    </location>
</feature>
<feature type="domain" description="GST C-terminal">
    <location>
        <begin position="84"/>
        <end position="208"/>
    </location>
</feature>
<feature type="binding site" evidence="3">
    <location>
        <position position="9"/>
    </location>
    <ligand>
        <name>glutathione</name>
        <dbReference type="ChEBI" id="CHEBI:57925"/>
    </ligand>
</feature>
<feature type="binding site" evidence="3">
    <location>
        <position position="45"/>
    </location>
    <ligand>
        <name>glutathione</name>
        <dbReference type="ChEBI" id="CHEBI:57925"/>
    </ligand>
</feature>
<feature type="binding site" evidence="5">
    <location>
        <begin position="53"/>
        <end position="54"/>
    </location>
    <ligand>
        <name>glutathione</name>
        <dbReference type="ChEBI" id="CHEBI:57925"/>
    </ligand>
</feature>
<feature type="binding site" evidence="3">
    <location>
        <begin position="66"/>
        <end position="67"/>
    </location>
    <ligand>
        <name>glutathione</name>
        <dbReference type="ChEBI" id="CHEBI:57925"/>
    </ligand>
</feature>
<feature type="modified residue" description="N-acetylmethionine" evidence="6">
    <location>
        <position position="1"/>
    </location>
</feature>
<feature type="modified residue" description="N-acetylalanine; in Glutathione S-transferase, N-terminally processed" evidence="4">
    <location>
        <position position="2"/>
    </location>
</feature>
<name>GSTA1_ANTST</name>
<organism>
    <name type="scientific">Antechinus stuartii</name>
    <name type="common">Brown marsupial mouse</name>
    <dbReference type="NCBI Taxonomy" id="9283"/>
    <lineage>
        <taxon>Eukaryota</taxon>
        <taxon>Metazoa</taxon>
        <taxon>Chordata</taxon>
        <taxon>Craniata</taxon>
        <taxon>Vertebrata</taxon>
        <taxon>Euteleostomi</taxon>
        <taxon>Mammalia</taxon>
        <taxon>Metatheria</taxon>
        <taxon>Dasyuromorphia</taxon>
        <taxon>Dasyuridae</taxon>
        <taxon>Antechinus</taxon>
    </lineage>
</organism>
<dbReference type="EC" id="2.5.1.18" evidence="2"/>
<dbReference type="SMR" id="P80894"/>
<dbReference type="iPTMnet" id="P80894"/>
<dbReference type="GO" id="GO:0005737">
    <property type="term" value="C:cytoplasm"/>
    <property type="evidence" value="ECO:0007669"/>
    <property type="project" value="UniProtKB-SubCell"/>
</dbReference>
<dbReference type="GO" id="GO:0004364">
    <property type="term" value="F:glutathione transferase activity"/>
    <property type="evidence" value="ECO:0000250"/>
    <property type="project" value="UniProtKB"/>
</dbReference>
<dbReference type="GO" id="GO:0006749">
    <property type="term" value="P:glutathione metabolic process"/>
    <property type="evidence" value="ECO:0000250"/>
    <property type="project" value="UniProtKB"/>
</dbReference>
<dbReference type="GO" id="GO:0006805">
    <property type="term" value="P:xenobiotic metabolic process"/>
    <property type="evidence" value="ECO:0007669"/>
    <property type="project" value="TreeGrafter"/>
</dbReference>
<dbReference type="CDD" id="cd03208">
    <property type="entry name" value="GST_C_Alpha"/>
    <property type="match status" value="1"/>
</dbReference>
<dbReference type="FunFam" id="1.20.1050.10:FF:000005">
    <property type="entry name" value="Glutathione S-transferase A1"/>
    <property type="match status" value="1"/>
</dbReference>
<dbReference type="Gene3D" id="1.20.1050.10">
    <property type="match status" value="1"/>
</dbReference>
<dbReference type="Gene3D" id="3.40.30.10">
    <property type="entry name" value="Glutaredoxin"/>
    <property type="match status" value="1"/>
</dbReference>
<dbReference type="InterPro" id="IPR010987">
    <property type="entry name" value="Glutathione-S-Trfase_C-like"/>
</dbReference>
<dbReference type="InterPro" id="IPR036282">
    <property type="entry name" value="Glutathione-S-Trfase_C_sf"/>
</dbReference>
<dbReference type="InterPro" id="IPR040079">
    <property type="entry name" value="Glutathione_S-Trfase"/>
</dbReference>
<dbReference type="InterPro" id="IPR004045">
    <property type="entry name" value="Glutathione_S-Trfase_N"/>
</dbReference>
<dbReference type="InterPro" id="IPR003080">
    <property type="entry name" value="GST_alpha"/>
</dbReference>
<dbReference type="InterPro" id="IPR004046">
    <property type="entry name" value="GST_C"/>
</dbReference>
<dbReference type="InterPro" id="IPR050213">
    <property type="entry name" value="GST_superfamily"/>
</dbReference>
<dbReference type="InterPro" id="IPR036249">
    <property type="entry name" value="Thioredoxin-like_sf"/>
</dbReference>
<dbReference type="PANTHER" id="PTHR11571">
    <property type="entry name" value="GLUTATHIONE S-TRANSFERASE"/>
    <property type="match status" value="1"/>
</dbReference>
<dbReference type="PANTHER" id="PTHR11571:SF107">
    <property type="entry name" value="GLUTATHIONE S-TRANSFERASE A1"/>
    <property type="match status" value="1"/>
</dbReference>
<dbReference type="Pfam" id="PF00043">
    <property type="entry name" value="GST_C"/>
    <property type="match status" value="1"/>
</dbReference>
<dbReference type="Pfam" id="PF02798">
    <property type="entry name" value="GST_N"/>
    <property type="match status" value="1"/>
</dbReference>
<dbReference type="PRINTS" id="PR01266">
    <property type="entry name" value="GSTRNSFRASEA"/>
</dbReference>
<dbReference type="SFLD" id="SFLDG01205">
    <property type="entry name" value="AMPS.1"/>
    <property type="match status" value="1"/>
</dbReference>
<dbReference type="SFLD" id="SFLDS00019">
    <property type="entry name" value="Glutathione_Transferase_(cytos"/>
    <property type="match status" value="1"/>
</dbReference>
<dbReference type="SUPFAM" id="SSF47616">
    <property type="entry name" value="GST C-terminal domain-like"/>
    <property type="match status" value="1"/>
</dbReference>
<dbReference type="SUPFAM" id="SSF52833">
    <property type="entry name" value="Thioredoxin-like"/>
    <property type="match status" value="1"/>
</dbReference>
<dbReference type="PROSITE" id="PS50405">
    <property type="entry name" value="GST_CTER"/>
    <property type="match status" value="1"/>
</dbReference>
<dbReference type="PROSITE" id="PS50404">
    <property type="entry name" value="GST_NTER"/>
    <property type="match status" value="1"/>
</dbReference>